<sequence length="566" mass="60905">MKISRHAYADTYGPTTGDRVRLADTDLWIKVERDLTTYGDEVKFGGGKVIRDGMGQSQLSRDQVMDLVITNALIVDHWGIIKADVGIKDGRIAAIGKAGNPDTQPNVDINIGAATEVIAGEGKILTAGGIDSHVHFICPQLVEEALTSGVTTLIGGGTGPATGTNATTCTPGSWNIGRMLQAADAFPINMGFLGKGNASLPQSLEEQVRAGVLGLKLHEDWGTTPAAIDNCLSVAERFDVQVTIHTDTLNESGFVEDTIAAFKDRTIHTYHTEGAGGGHAPDIIKACGEANVLPSSTNPTTPFTANTIDEHLDMLMVCHHLDPSIPEDVAFAESRIRRETISAEDALHDMGALSMHGSDSQAMGRVGEVILRTWQSASVMKRDRGTLPEDKGDHDNFRIKRYIAKYTINPAITHGIAHEIGSIEVGKLADLVLWKPAFFGVKPSLVLKGGVIVTAPMGDPNASIPTPQPVHYRPMFGSFGGSRTASCVSFVSQAGLDEGIGEKLGLQKRLVAVKNIRGLRKSDLIHNNALPRIEVDPQNYQVRADGQLLWFEPSKVLPMAQRYFLF</sequence>
<name>URE1_NITOC</name>
<organism>
    <name type="scientific">Nitrosococcus oceani (strain ATCC 19707 / BCRC 17464 / JCM 30415 / NCIMB 11848 / C-107)</name>
    <dbReference type="NCBI Taxonomy" id="323261"/>
    <lineage>
        <taxon>Bacteria</taxon>
        <taxon>Pseudomonadati</taxon>
        <taxon>Pseudomonadota</taxon>
        <taxon>Gammaproteobacteria</taxon>
        <taxon>Chromatiales</taxon>
        <taxon>Chromatiaceae</taxon>
        <taxon>Nitrosococcus</taxon>
    </lineage>
</organism>
<evidence type="ECO:0000255" key="1">
    <source>
        <dbReference type="HAMAP-Rule" id="MF_01953"/>
    </source>
</evidence>
<dbReference type="EC" id="3.5.1.5" evidence="1"/>
<dbReference type="EMBL" id="CP000127">
    <property type="protein sequence ID" value="ABA59326.1"/>
    <property type="molecule type" value="Genomic_DNA"/>
</dbReference>
<dbReference type="RefSeq" id="WP_002813914.1">
    <property type="nucleotide sequence ID" value="NC_007484.1"/>
</dbReference>
<dbReference type="SMR" id="Q3J770"/>
<dbReference type="STRING" id="323261.Noc_2880"/>
<dbReference type="KEGG" id="noc:Noc_2880"/>
<dbReference type="eggNOG" id="COG0804">
    <property type="taxonomic scope" value="Bacteria"/>
</dbReference>
<dbReference type="HOGENOM" id="CLU_000980_0_0_6"/>
<dbReference type="InParanoid" id="Q3J770"/>
<dbReference type="UniPathway" id="UPA00258">
    <property type="reaction ID" value="UER00370"/>
</dbReference>
<dbReference type="Proteomes" id="UP000006838">
    <property type="component" value="Chromosome"/>
</dbReference>
<dbReference type="GO" id="GO:0005737">
    <property type="term" value="C:cytoplasm"/>
    <property type="evidence" value="ECO:0007669"/>
    <property type="project" value="UniProtKB-SubCell"/>
</dbReference>
<dbReference type="GO" id="GO:0016151">
    <property type="term" value="F:nickel cation binding"/>
    <property type="evidence" value="ECO:0007669"/>
    <property type="project" value="UniProtKB-UniRule"/>
</dbReference>
<dbReference type="GO" id="GO:0009039">
    <property type="term" value="F:urease activity"/>
    <property type="evidence" value="ECO:0007669"/>
    <property type="project" value="UniProtKB-UniRule"/>
</dbReference>
<dbReference type="GO" id="GO:0043419">
    <property type="term" value="P:urea catabolic process"/>
    <property type="evidence" value="ECO:0007669"/>
    <property type="project" value="UniProtKB-UniRule"/>
</dbReference>
<dbReference type="CDD" id="cd00375">
    <property type="entry name" value="Urease_alpha"/>
    <property type="match status" value="1"/>
</dbReference>
<dbReference type="Gene3D" id="3.20.20.140">
    <property type="entry name" value="Metal-dependent hydrolases"/>
    <property type="match status" value="1"/>
</dbReference>
<dbReference type="Gene3D" id="2.30.40.10">
    <property type="entry name" value="Urease, subunit C, domain 1"/>
    <property type="match status" value="1"/>
</dbReference>
<dbReference type="HAMAP" id="MF_01953">
    <property type="entry name" value="Urease_alpha"/>
    <property type="match status" value="1"/>
</dbReference>
<dbReference type="InterPro" id="IPR006680">
    <property type="entry name" value="Amidohydro-rel"/>
</dbReference>
<dbReference type="InterPro" id="IPR011059">
    <property type="entry name" value="Metal-dep_hydrolase_composite"/>
</dbReference>
<dbReference type="InterPro" id="IPR032466">
    <property type="entry name" value="Metal_Hydrolase"/>
</dbReference>
<dbReference type="InterPro" id="IPR011612">
    <property type="entry name" value="Urease_alpha_N_dom"/>
</dbReference>
<dbReference type="InterPro" id="IPR050112">
    <property type="entry name" value="Urease_alpha_subunit"/>
</dbReference>
<dbReference type="InterPro" id="IPR017950">
    <property type="entry name" value="Urease_AS"/>
</dbReference>
<dbReference type="InterPro" id="IPR005848">
    <property type="entry name" value="Urease_asu"/>
</dbReference>
<dbReference type="InterPro" id="IPR017951">
    <property type="entry name" value="Urease_asu_c"/>
</dbReference>
<dbReference type="InterPro" id="IPR029754">
    <property type="entry name" value="Urease_Ni-bd"/>
</dbReference>
<dbReference type="NCBIfam" id="NF009685">
    <property type="entry name" value="PRK13206.1"/>
    <property type="match status" value="1"/>
</dbReference>
<dbReference type="NCBIfam" id="NF009686">
    <property type="entry name" value="PRK13207.1"/>
    <property type="match status" value="1"/>
</dbReference>
<dbReference type="NCBIfam" id="TIGR01792">
    <property type="entry name" value="urease_alph"/>
    <property type="match status" value="1"/>
</dbReference>
<dbReference type="PANTHER" id="PTHR43440">
    <property type="entry name" value="UREASE"/>
    <property type="match status" value="1"/>
</dbReference>
<dbReference type="PANTHER" id="PTHR43440:SF1">
    <property type="entry name" value="UREASE"/>
    <property type="match status" value="1"/>
</dbReference>
<dbReference type="Pfam" id="PF01979">
    <property type="entry name" value="Amidohydro_1"/>
    <property type="match status" value="1"/>
</dbReference>
<dbReference type="Pfam" id="PF00449">
    <property type="entry name" value="Urease_alpha"/>
    <property type="match status" value="1"/>
</dbReference>
<dbReference type="PRINTS" id="PR01752">
    <property type="entry name" value="UREASE"/>
</dbReference>
<dbReference type="SUPFAM" id="SSF51338">
    <property type="entry name" value="Composite domain of metallo-dependent hydrolases"/>
    <property type="match status" value="1"/>
</dbReference>
<dbReference type="SUPFAM" id="SSF51556">
    <property type="entry name" value="Metallo-dependent hydrolases"/>
    <property type="match status" value="1"/>
</dbReference>
<dbReference type="PROSITE" id="PS01120">
    <property type="entry name" value="UREASE_1"/>
    <property type="match status" value="1"/>
</dbReference>
<dbReference type="PROSITE" id="PS00145">
    <property type="entry name" value="UREASE_2"/>
    <property type="match status" value="1"/>
</dbReference>
<dbReference type="PROSITE" id="PS51368">
    <property type="entry name" value="UREASE_3"/>
    <property type="match status" value="1"/>
</dbReference>
<feature type="chain" id="PRO_0000234159" description="Urease subunit alpha">
    <location>
        <begin position="1"/>
        <end position="566"/>
    </location>
</feature>
<feature type="domain" description="Urease" evidence="1">
    <location>
        <begin position="128"/>
        <end position="566"/>
    </location>
</feature>
<feature type="active site" description="Proton donor" evidence="1">
    <location>
        <position position="319"/>
    </location>
</feature>
<feature type="binding site" evidence="1">
    <location>
        <position position="133"/>
    </location>
    <ligand>
        <name>Ni(2+)</name>
        <dbReference type="ChEBI" id="CHEBI:49786"/>
        <label>1</label>
    </ligand>
</feature>
<feature type="binding site" evidence="1">
    <location>
        <position position="135"/>
    </location>
    <ligand>
        <name>Ni(2+)</name>
        <dbReference type="ChEBI" id="CHEBI:49786"/>
        <label>1</label>
    </ligand>
</feature>
<feature type="binding site" description="via carbamate group" evidence="1">
    <location>
        <position position="216"/>
    </location>
    <ligand>
        <name>Ni(2+)</name>
        <dbReference type="ChEBI" id="CHEBI:49786"/>
        <label>1</label>
    </ligand>
</feature>
<feature type="binding site" description="via carbamate group" evidence="1">
    <location>
        <position position="216"/>
    </location>
    <ligand>
        <name>Ni(2+)</name>
        <dbReference type="ChEBI" id="CHEBI:49786"/>
        <label>2</label>
    </ligand>
</feature>
<feature type="binding site" evidence="1">
    <location>
        <position position="218"/>
    </location>
    <ligand>
        <name>substrate</name>
    </ligand>
</feature>
<feature type="binding site" evidence="1">
    <location>
        <position position="245"/>
    </location>
    <ligand>
        <name>Ni(2+)</name>
        <dbReference type="ChEBI" id="CHEBI:49786"/>
        <label>2</label>
    </ligand>
</feature>
<feature type="binding site" evidence="1">
    <location>
        <position position="271"/>
    </location>
    <ligand>
        <name>Ni(2+)</name>
        <dbReference type="ChEBI" id="CHEBI:49786"/>
        <label>2</label>
    </ligand>
</feature>
<feature type="binding site" evidence="1">
    <location>
        <position position="359"/>
    </location>
    <ligand>
        <name>Ni(2+)</name>
        <dbReference type="ChEBI" id="CHEBI:49786"/>
        <label>1</label>
    </ligand>
</feature>
<feature type="modified residue" description="N6-carboxylysine" evidence="1">
    <location>
        <position position="216"/>
    </location>
</feature>
<gene>
    <name evidence="1" type="primary">ureC</name>
    <name type="ordered locus">Noc_2880</name>
</gene>
<keyword id="KW-0963">Cytoplasm</keyword>
<keyword id="KW-0378">Hydrolase</keyword>
<keyword id="KW-0479">Metal-binding</keyword>
<keyword id="KW-0533">Nickel</keyword>
<keyword id="KW-1185">Reference proteome</keyword>
<reference key="1">
    <citation type="journal article" date="2006" name="Appl. Environ. Microbiol.">
        <title>Complete genome sequence of the marine, chemolithoautotrophic, ammonia-oxidizing bacterium Nitrosococcus oceani ATCC 19707.</title>
        <authorList>
            <person name="Klotz M.G."/>
            <person name="Arp D.J."/>
            <person name="Chain P.S.G."/>
            <person name="El-Sheikh A.F."/>
            <person name="Hauser L.J."/>
            <person name="Hommes N.G."/>
            <person name="Larimer F.W."/>
            <person name="Malfatti S.A."/>
            <person name="Norton J.M."/>
            <person name="Poret-Peterson A.T."/>
            <person name="Vergez L.M."/>
            <person name="Ward B.B."/>
        </authorList>
    </citation>
    <scope>NUCLEOTIDE SEQUENCE [LARGE SCALE GENOMIC DNA]</scope>
    <source>
        <strain>ATCC 19707 / BCRC 17464 / JCM 30415 / NCIMB 11848 / C-107</strain>
    </source>
</reference>
<protein>
    <recommendedName>
        <fullName evidence="1">Urease subunit alpha</fullName>
        <ecNumber evidence="1">3.5.1.5</ecNumber>
    </recommendedName>
    <alternativeName>
        <fullName evidence="1">Urea amidohydrolase subunit alpha</fullName>
    </alternativeName>
</protein>
<accession>Q3J770</accession>
<proteinExistence type="inferred from homology"/>
<comment type="catalytic activity">
    <reaction evidence="1">
        <text>urea + 2 H2O + H(+) = hydrogencarbonate + 2 NH4(+)</text>
        <dbReference type="Rhea" id="RHEA:20557"/>
        <dbReference type="ChEBI" id="CHEBI:15377"/>
        <dbReference type="ChEBI" id="CHEBI:15378"/>
        <dbReference type="ChEBI" id="CHEBI:16199"/>
        <dbReference type="ChEBI" id="CHEBI:17544"/>
        <dbReference type="ChEBI" id="CHEBI:28938"/>
        <dbReference type="EC" id="3.5.1.5"/>
    </reaction>
</comment>
<comment type="cofactor">
    <cofactor evidence="1">
        <name>Ni cation</name>
        <dbReference type="ChEBI" id="CHEBI:25516"/>
    </cofactor>
    <text evidence="1">Binds 2 nickel ions per subunit.</text>
</comment>
<comment type="pathway">
    <text evidence="1">Nitrogen metabolism; urea degradation; CO(2) and NH(3) from urea (urease route): step 1/1.</text>
</comment>
<comment type="subunit">
    <text evidence="1">Heterotrimer of UreA (gamma), UreB (beta) and UreC (alpha) subunits. Three heterotrimers associate to form the active enzyme.</text>
</comment>
<comment type="subcellular location">
    <subcellularLocation>
        <location evidence="1">Cytoplasm</location>
    </subcellularLocation>
</comment>
<comment type="PTM">
    <text evidence="1">Carboxylation allows a single lysine to coordinate two nickel ions.</text>
</comment>
<comment type="similarity">
    <text evidence="1">Belongs to the metallo-dependent hydrolases superfamily. Urease alpha subunit family.</text>
</comment>